<sequence>MLKKTLLSLTAVSMLASAGSALAAEYKFDKEGQHAFIEFRIKHLGYSWLYGSFNDFDGTFAFDEKNPSADKVNVTINTNSVDTNHAERDKHLRSAEFLNVSKHPQATFTSTEVKKDGDDYDITGNLTLNGVTKPVKLDAKLIGQGDDPWGNYRAGFQAEGTIKLKDFNITTDLGPASQDVELIIAVEGVRQK</sequence>
<reference key="1">
    <citation type="journal article" date="2004" name="Proc. Natl. Acad. Sci. U.S.A.">
        <title>Genome sequence of the enterobacterial phytopathogen Erwinia carotovora subsp. atroseptica and characterization of virulence factors.</title>
        <authorList>
            <person name="Bell K.S."/>
            <person name="Sebaihia M."/>
            <person name="Pritchard L."/>
            <person name="Holden M.T.G."/>
            <person name="Hyman L.J."/>
            <person name="Holeva M.C."/>
            <person name="Thomson N.R."/>
            <person name="Bentley S.D."/>
            <person name="Churcher L.J.C."/>
            <person name="Mungall K."/>
            <person name="Atkin R."/>
            <person name="Bason N."/>
            <person name="Brooks K."/>
            <person name="Chillingworth T."/>
            <person name="Clark K."/>
            <person name="Doggett J."/>
            <person name="Fraser A."/>
            <person name="Hance Z."/>
            <person name="Hauser H."/>
            <person name="Jagels K."/>
            <person name="Moule S."/>
            <person name="Norbertczak H."/>
            <person name="Ormond D."/>
            <person name="Price C."/>
            <person name="Quail M.A."/>
            <person name="Sanders M."/>
            <person name="Walker D."/>
            <person name="Whitehead S."/>
            <person name="Salmond G.P.C."/>
            <person name="Birch P.R.J."/>
            <person name="Parkhill J."/>
            <person name="Toth I.K."/>
        </authorList>
    </citation>
    <scope>NUCLEOTIDE SEQUENCE [LARGE SCALE GENOMIC DNA]</scope>
    <source>
        <strain>SCRI 1043 / ATCC BAA-672</strain>
    </source>
</reference>
<keyword id="KW-0574">Periplasm</keyword>
<keyword id="KW-1185">Reference proteome</keyword>
<keyword id="KW-0732">Signal</keyword>
<dbReference type="EMBL" id="BX950851">
    <property type="protein sequence ID" value="CAG74687.1"/>
    <property type="molecule type" value="Genomic_DNA"/>
</dbReference>
<dbReference type="SMR" id="Q6D6A3"/>
<dbReference type="STRING" id="218491.ECA1782"/>
<dbReference type="KEGG" id="eca:ECA1782"/>
<dbReference type="PATRIC" id="fig|218491.5.peg.1809"/>
<dbReference type="eggNOG" id="COG2353">
    <property type="taxonomic scope" value="Bacteria"/>
</dbReference>
<dbReference type="HOGENOM" id="CLU_071003_1_2_6"/>
<dbReference type="Proteomes" id="UP000007966">
    <property type="component" value="Chromosome"/>
</dbReference>
<dbReference type="GO" id="GO:0042597">
    <property type="term" value="C:periplasmic space"/>
    <property type="evidence" value="ECO:0007669"/>
    <property type="project" value="UniProtKB-SubCell"/>
</dbReference>
<dbReference type="Gene3D" id="2.40.128.110">
    <property type="entry name" value="Lipid/polyisoprenoid-binding, YceI-like"/>
    <property type="match status" value="1"/>
</dbReference>
<dbReference type="HAMAP" id="MF_00780">
    <property type="entry name" value="UPF0312"/>
    <property type="match status" value="1"/>
</dbReference>
<dbReference type="InterPro" id="IPR007372">
    <property type="entry name" value="Lipid/polyisoprenoid-bd_YceI"/>
</dbReference>
<dbReference type="InterPro" id="IPR036761">
    <property type="entry name" value="TTHA0802/YceI-like_sf"/>
</dbReference>
<dbReference type="InterPro" id="IPR023480">
    <property type="entry name" value="UPF0312/YceI"/>
</dbReference>
<dbReference type="NCBIfam" id="NF002994">
    <property type="entry name" value="PRK03757.1"/>
    <property type="match status" value="1"/>
</dbReference>
<dbReference type="PANTHER" id="PTHR34406">
    <property type="entry name" value="PROTEIN YCEI"/>
    <property type="match status" value="1"/>
</dbReference>
<dbReference type="PANTHER" id="PTHR34406:SF1">
    <property type="entry name" value="PROTEIN YCEI"/>
    <property type="match status" value="1"/>
</dbReference>
<dbReference type="Pfam" id="PF04264">
    <property type="entry name" value="YceI"/>
    <property type="match status" value="1"/>
</dbReference>
<dbReference type="SMART" id="SM00867">
    <property type="entry name" value="YceI"/>
    <property type="match status" value="1"/>
</dbReference>
<dbReference type="SUPFAM" id="SSF101874">
    <property type="entry name" value="YceI-like"/>
    <property type="match status" value="1"/>
</dbReference>
<protein>
    <recommendedName>
        <fullName evidence="1">UPF0312 protein ECA1782</fullName>
    </recommendedName>
</protein>
<accession>Q6D6A3</accession>
<gene>
    <name type="ordered locus">ECA1782</name>
</gene>
<name>Y1782_PECAS</name>
<comment type="subcellular location">
    <subcellularLocation>
        <location evidence="1">Periplasm</location>
    </subcellularLocation>
</comment>
<comment type="similarity">
    <text evidence="1">Belongs to the UPF0312 family. Type 1 subfamily.</text>
</comment>
<evidence type="ECO:0000255" key="1">
    <source>
        <dbReference type="HAMAP-Rule" id="MF_00780"/>
    </source>
</evidence>
<organism>
    <name type="scientific">Pectobacterium atrosepticum (strain SCRI 1043 / ATCC BAA-672)</name>
    <name type="common">Erwinia carotovora subsp. atroseptica</name>
    <dbReference type="NCBI Taxonomy" id="218491"/>
    <lineage>
        <taxon>Bacteria</taxon>
        <taxon>Pseudomonadati</taxon>
        <taxon>Pseudomonadota</taxon>
        <taxon>Gammaproteobacteria</taxon>
        <taxon>Enterobacterales</taxon>
        <taxon>Pectobacteriaceae</taxon>
        <taxon>Pectobacterium</taxon>
    </lineage>
</organism>
<feature type="signal peptide" evidence="1">
    <location>
        <begin position="1"/>
        <end position="23"/>
    </location>
</feature>
<feature type="chain" id="PRO_0000226319" description="UPF0312 protein ECA1782">
    <location>
        <begin position="24"/>
        <end position="192"/>
    </location>
</feature>
<proteinExistence type="inferred from homology"/>